<sequence length="373" mass="39917">MKFIDEARIEVIAGDGGDGSASMRREKFVPFGGPDGGDGGRGGSVIAVADRNINTLIDYRYAKKHLARNGENGRGADCYGKGGDDITLRMPVGTTITDMETGELIADLTEHNQSVQIAQGGAGGLGNLHFKSSTNRAPRQKTDGKPGERRMVRLELKVLADVGLLGMPNAGKSTFIASVSNAKPKIADYPFTTLAPNLGVVRVGPSRSFVIADIPGLIEGAAEGAGLGHQFLRHLQRTGLLLHIVDLAPFDDAVDPVAEAKAIVNELRKYDELLYEKPRWLVLNKLDMVPEDEREARVSAFLEGFGWDGPVFEISALTGQGCENLCYAVFDHISAHSDAQRAAEAEDLAADVRFREKPQAPAAADDAGTDPQV</sequence>
<dbReference type="EC" id="3.6.5.-" evidence="1"/>
<dbReference type="EMBL" id="CP001052">
    <property type="protein sequence ID" value="ACD17837.1"/>
    <property type="molecule type" value="Genomic_DNA"/>
</dbReference>
<dbReference type="RefSeq" id="WP_012434400.1">
    <property type="nucleotide sequence ID" value="NC_010681.1"/>
</dbReference>
<dbReference type="SMR" id="B2SYV2"/>
<dbReference type="STRING" id="398527.Bphyt_3447"/>
<dbReference type="KEGG" id="bpy:Bphyt_3447"/>
<dbReference type="eggNOG" id="COG0536">
    <property type="taxonomic scope" value="Bacteria"/>
</dbReference>
<dbReference type="HOGENOM" id="CLU_011747_2_0_4"/>
<dbReference type="OrthoDB" id="9807318at2"/>
<dbReference type="Proteomes" id="UP000001739">
    <property type="component" value="Chromosome 1"/>
</dbReference>
<dbReference type="GO" id="GO:0005737">
    <property type="term" value="C:cytoplasm"/>
    <property type="evidence" value="ECO:0007669"/>
    <property type="project" value="UniProtKB-SubCell"/>
</dbReference>
<dbReference type="GO" id="GO:0005525">
    <property type="term" value="F:GTP binding"/>
    <property type="evidence" value="ECO:0007669"/>
    <property type="project" value="UniProtKB-UniRule"/>
</dbReference>
<dbReference type="GO" id="GO:0003924">
    <property type="term" value="F:GTPase activity"/>
    <property type="evidence" value="ECO:0007669"/>
    <property type="project" value="UniProtKB-UniRule"/>
</dbReference>
<dbReference type="GO" id="GO:0000287">
    <property type="term" value="F:magnesium ion binding"/>
    <property type="evidence" value="ECO:0007669"/>
    <property type="project" value="InterPro"/>
</dbReference>
<dbReference type="GO" id="GO:0042254">
    <property type="term" value="P:ribosome biogenesis"/>
    <property type="evidence" value="ECO:0007669"/>
    <property type="project" value="UniProtKB-UniRule"/>
</dbReference>
<dbReference type="CDD" id="cd01898">
    <property type="entry name" value="Obg"/>
    <property type="match status" value="1"/>
</dbReference>
<dbReference type="FunFam" id="2.70.210.12:FF:000001">
    <property type="entry name" value="GTPase Obg"/>
    <property type="match status" value="1"/>
</dbReference>
<dbReference type="Gene3D" id="2.70.210.12">
    <property type="entry name" value="GTP1/OBG domain"/>
    <property type="match status" value="1"/>
</dbReference>
<dbReference type="Gene3D" id="3.40.50.300">
    <property type="entry name" value="P-loop containing nucleotide triphosphate hydrolases"/>
    <property type="match status" value="1"/>
</dbReference>
<dbReference type="HAMAP" id="MF_01454">
    <property type="entry name" value="GTPase_Obg"/>
    <property type="match status" value="1"/>
</dbReference>
<dbReference type="InterPro" id="IPR031167">
    <property type="entry name" value="G_OBG"/>
</dbReference>
<dbReference type="InterPro" id="IPR006073">
    <property type="entry name" value="GTP-bd"/>
</dbReference>
<dbReference type="InterPro" id="IPR014100">
    <property type="entry name" value="GTP-bd_Obg/CgtA"/>
</dbReference>
<dbReference type="InterPro" id="IPR006074">
    <property type="entry name" value="GTP1-OBG_CS"/>
</dbReference>
<dbReference type="InterPro" id="IPR006169">
    <property type="entry name" value="GTP1_OBG_dom"/>
</dbReference>
<dbReference type="InterPro" id="IPR036726">
    <property type="entry name" value="GTP1_OBG_dom_sf"/>
</dbReference>
<dbReference type="InterPro" id="IPR045086">
    <property type="entry name" value="OBG_GTPase"/>
</dbReference>
<dbReference type="InterPro" id="IPR027417">
    <property type="entry name" value="P-loop_NTPase"/>
</dbReference>
<dbReference type="NCBIfam" id="TIGR02729">
    <property type="entry name" value="Obg_CgtA"/>
    <property type="match status" value="1"/>
</dbReference>
<dbReference type="NCBIfam" id="NF008954">
    <property type="entry name" value="PRK12296.1"/>
    <property type="match status" value="1"/>
</dbReference>
<dbReference type="NCBIfam" id="NF008955">
    <property type="entry name" value="PRK12297.1"/>
    <property type="match status" value="1"/>
</dbReference>
<dbReference type="NCBIfam" id="NF008956">
    <property type="entry name" value="PRK12299.1"/>
    <property type="match status" value="1"/>
</dbReference>
<dbReference type="PANTHER" id="PTHR11702">
    <property type="entry name" value="DEVELOPMENTALLY REGULATED GTP-BINDING PROTEIN-RELATED"/>
    <property type="match status" value="1"/>
</dbReference>
<dbReference type="PANTHER" id="PTHR11702:SF31">
    <property type="entry name" value="MITOCHONDRIAL RIBOSOME-ASSOCIATED GTPASE 2"/>
    <property type="match status" value="1"/>
</dbReference>
<dbReference type="Pfam" id="PF01018">
    <property type="entry name" value="GTP1_OBG"/>
    <property type="match status" value="1"/>
</dbReference>
<dbReference type="Pfam" id="PF01926">
    <property type="entry name" value="MMR_HSR1"/>
    <property type="match status" value="1"/>
</dbReference>
<dbReference type="PIRSF" id="PIRSF002401">
    <property type="entry name" value="GTP_bd_Obg/CgtA"/>
    <property type="match status" value="1"/>
</dbReference>
<dbReference type="PRINTS" id="PR00326">
    <property type="entry name" value="GTP1OBG"/>
</dbReference>
<dbReference type="SUPFAM" id="SSF82051">
    <property type="entry name" value="Obg GTP-binding protein N-terminal domain"/>
    <property type="match status" value="1"/>
</dbReference>
<dbReference type="SUPFAM" id="SSF52540">
    <property type="entry name" value="P-loop containing nucleoside triphosphate hydrolases"/>
    <property type="match status" value="1"/>
</dbReference>
<dbReference type="PROSITE" id="PS51710">
    <property type="entry name" value="G_OBG"/>
    <property type="match status" value="1"/>
</dbReference>
<dbReference type="PROSITE" id="PS00905">
    <property type="entry name" value="GTP1_OBG"/>
    <property type="match status" value="1"/>
</dbReference>
<dbReference type="PROSITE" id="PS51883">
    <property type="entry name" value="OBG"/>
    <property type="match status" value="1"/>
</dbReference>
<name>OBG_PARPJ</name>
<reference key="1">
    <citation type="journal article" date="2011" name="J. Bacteriol.">
        <title>Complete genome sequence of the plant growth-promoting endophyte Burkholderia phytofirmans strain PsJN.</title>
        <authorList>
            <person name="Weilharter A."/>
            <person name="Mitter B."/>
            <person name="Shin M.V."/>
            <person name="Chain P.S."/>
            <person name="Nowak J."/>
            <person name="Sessitsch A."/>
        </authorList>
    </citation>
    <scope>NUCLEOTIDE SEQUENCE [LARGE SCALE GENOMIC DNA]</scope>
    <source>
        <strain>DSM 17436 / LMG 22146 / PsJN</strain>
    </source>
</reference>
<organism>
    <name type="scientific">Paraburkholderia phytofirmans (strain DSM 17436 / LMG 22146 / PsJN)</name>
    <name type="common">Burkholderia phytofirmans</name>
    <dbReference type="NCBI Taxonomy" id="398527"/>
    <lineage>
        <taxon>Bacteria</taxon>
        <taxon>Pseudomonadati</taxon>
        <taxon>Pseudomonadota</taxon>
        <taxon>Betaproteobacteria</taxon>
        <taxon>Burkholderiales</taxon>
        <taxon>Burkholderiaceae</taxon>
        <taxon>Paraburkholderia</taxon>
    </lineage>
</organism>
<protein>
    <recommendedName>
        <fullName evidence="1">GTPase Obg</fullName>
        <ecNumber evidence="1">3.6.5.-</ecNumber>
    </recommendedName>
    <alternativeName>
        <fullName evidence="1">GTP-binding protein Obg</fullName>
    </alternativeName>
</protein>
<evidence type="ECO:0000255" key="1">
    <source>
        <dbReference type="HAMAP-Rule" id="MF_01454"/>
    </source>
</evidence>
<evidence type="ECO:0000255" key="2">
    <source>
        <dbReference type="PROSITE-ProRule" id="PRU01231"/>
    </source>
</evidence>
<evidence type="ECO:0000256" key="3">
    <source>
        <dbReference type="SAM" id="MobiDB-lite"/>
    </source>
</evidence>
<feature type="chain" id="PRO_0000385788" description="GTPase Obg">
    <location>
        <begin position="1"/>
        <end position="373"/>
    </location>
</feature>
<feature type="domain" description="Obg" evidence="2">
    <location>
        <begin position="1"/>
        <end position="159"/>
    </location>
</feature>
<feature type="domain" description="OBG-type G" evidence="1">
    <location>
        <begin position="160"/>
        <end position="334"/>
    </location>
</feature>
<feature type="region of interest" description="Disordered" evidence="3">
    <location>
        <begin position="128"/>
        <end position="147"/>
    </location>
</feature>
<feature type="region of interest" description="Disordered" evidence="3">
    <location>
        <begin position="354"/>
        <end position="373"/>
    </location>
</feature>
<feature type="compositionally biased region" description="Low complexity" evidence="3">
    <location>
        <begin position="359"/>
        <end position="373"/>
    </location>
</feature>
<feature type="binding site" evidence="1">
    <location>
        <begin position="166"/>
        <end position="173"/>
    </location>
    <ligand>
        <name>GTP</name>
        <dbReference type="ChEBI" id="CHEBI:37565"/>
    </ligand>
</feature>
<feature type="binding site" evidence="1">
    <location>
        <position position="173"/>
    </location>
    <ligand>
        <name>Mg(2+)</name>
        <dbReference type="ChEBI" id="CHEBI:18420"/>
    </ligand>
</feature>
<feature type="binding site" evidence="1">
    <location>
        <begin position="191"/>
        <end position="195"/>
    </location>
    <ligand>
        <name>GTP</name>
        <dbReference type="ChEBI" id="CHEBI:37565"/>
    </ligand>
</feature>
<feature type="binding site" evidence="1">
    <location>
        <position position="193"/>
    </location>
    <ligand>
        <name>Mg(2+)</name>
        <dbReference type="ChEBI" id="CHEBI:18420"/>
    </ligand>
</feature>
<feature type="binding site" evidence="1">
    <location>
        <begin position="213"/>
        <end position="216"/>
    </location>
    <ligand>
        <name>GTP</name>
        <dbReference type="ChEBI" id="CHEBI:37565"/>
    </ligand>
</feature>
<feature type="binding site" evidence="1">
    <location>
        <begin position="284"/>
        <end position="287"/>
    </location>
    <ligand>
        <name>GTP</name>
        <dbReference type="ChEBI" id="CHEBI:37565"/>
    </ligand>
</feature>
<feature type="binding site" evidence="1">
    <location>
        <begin position="315"/>
        <end position="317"/>
    </location>
    <ligand>
        <name>GTP</name>
        <dbReference type="ChEBI" id="CHEBI:37565"/>
    </ligand>
</feature>
<comment type="function">
    <text evidence="1">An essential GTPase which binds GTP, GDP and possibly (p)ppGpp with moderate affinity, with high nucleotide exchange rates and a fairly low GTP hydrolysis rate. Plays a role in control of the cell cycle, stress response, ribosome biogenesis and in those bacteria that undergo differentiation, in morphogenesis control.</text>
</comment>
<comment type="cofactor">
    <cofactor evidence="1">
        <name>Mg(2+)</name>
        <dbReference type="ChEBI" id="CHEBI:18420"/>
    </cofactor>
</comment>
<comment type="subunit">
    <text evidence="1">Monomer.</text>
</comment>
<comment type="subcellular location">
    <subcellularLocation>
        <location evidence="1">Cytoplasm</location>
    </subcellularLocation>
</comment>
<comment type="similarity">
    <text evidence="1">Belongs to the TRAFAC class OBG-HflX-like GTPase superfamily. OBG GTPase family.</text>
</comment>
<proteinExistence type="inferred from homology"/>
<accession>B2SYV2</accession>
<keyword id="KW-0963">Cytoplasm</keyword>
<keyword id="KW-0342">GTP-binding</keyword>
<keyword id="KW-0378">Hydrolase</keyword>
<keyword id="KW-0460">Magnesium</keyword>
<keyword id="KW-0479">Metal-binding</keyword>
<keyword id="KW-0547">Nucleotide-binding</keyword>
<gene>
    <name evidence="1" type="primary">obg</name>
    <name type="ordered locus">Bphyt_3447</name>
</gene>